<gene>
    <name type="primary">tsf</name>
    <name type="ordered locus">aq_715</name>
</gene>
<name>EFTS_AQUAE</name>
<dbReference type="EMBL" id="AE000657">
    <property type="protein sequence ID" value="AAC06887.1"/>
    <property type="molecule type" value="Genomic_DNA"/>
</dbReference>
<dbReference type="PIR" id="F70362">
    <property type="entry name" value="F70362"/>
</dbReference>
<dbReference type="RefSeq" id="NP_213490.1">
    <property type="nucleotide sequence ID" value="NC_000918.1"/>
</dbReference>
<dbReference type="RefSeq" id="WP_010880428.1">
    <property type="nucleotide sequence ID" value="NC_000918.1"/>
</dbReference>
<dbReference type="SMR" id="O66930"/>
<dbReference type="FunCoup" id="O66930">
    <property type="interactions" value="443"/>
</dbReference>
<dbReference type="STRING" id="224324.aq_715"/>
<dbReference type="EnsemblBacteria" id="AAC06887">
    <property type="protein sequence ID" value="AAC06887"/>
    <property type="gene ID" value="aq_715"/>
</dbReference>
<dbReference type="KEGG" id="aae:aq_715"/>
<dbReference type="PATRIC" id="fig|224324.8.peg.572"/>
<dbReference type="eggNOG" id="COG0264">
    <property type="taxonomic scope" value="Bacteria"/>
</dbReference>
<dbReference type="HOGENOM" id="CLU_047155_0_2_0"/>
<dbReference type="InParanoid" id="O66930"/>
<dbReference type="OrthoDB" id="9808348at2"/>
<dbReference type="Proteomes" id="UP000000798">
    <property type="component" value="Chromosome"/>
</dbReference>
<dbReference type="GO" id="GO:0005737">
    <property type="term" value="C:cytoplasm"/>
    <property type="evidence" value="ECO:0007669"/>
    <property type="project" value="UniProtKB-SubCell"/>
</dbReference>
<dbReference type="GO" id="GO:0003746">
    <property type="term" value="F:translation elongation factor activity"/>
    <property type="evidence" value="ECO:0000318"/>
    <property type="project" value="GO_Central"/>
</dbReference>
<dbReference type="GO" id="GO:0006414">
    <property type="term" value="P:translational elongation"/>
    <property type="evidence" value="ECO:0000318"/>
    <property type="project" value="GO_Central"/>
</dbReference>
<dbReference type="CDD" id="cd14275">
    <property type="entry name" value="UBA_EF-Ts"/>
    <property type="match status" value="1"/>
</dbReference>
<dbReference type="FunFam" id="1.10.286.20:FF:000001">
    <property type="entry name" value="Elongation factor Ts"/>
    <property type="match status" value="1"/>
</dbReference>
<dbReference type="FunFam" id="1.10.8.10:FF:000001">
    <property type="entry name" value="Elongation factor Ts"/>
    <property type="match status" value="1"/>
</dbReference>
<dbReference type="Gene3D" id="1.10.286.20">
    <property type="match status" value="1"/>
</dbReference>
<dbReference type="Gene3D" id="1.10.8.10">
    <property type="entry name" value="DNA helicase RuvA subunit, C-terminal domain"/>
    <property type="match status" value="1"/>
</dbReference>
<dbReference type="Gene3D" id="3.30.479.20">
    <property type="entry name" value="Elongation factor Ts, dimerisation domain"/>
    <property type="match status" value="2"/>
</dbReference>
<dbReference type="HAMAP" id="MF_00050">
    <property type="entry name" value="EF_Ts"/>
    <property type="match status" value="1"/>
</dbReference>
<dbReference type="InterPro" id="IPR036402">
    <property type="entry name" value="EF-Ts_dimer_sf"/>
</dbReference>
<dbReference type="InterPro" id="IPR001816">
    <property type="entry name" value="Transl_elong_EFTs/EF1B"/>
</dbReference>
<dbReference type="InterPro" id="IPR014039">
    <property type="entry name" value="Transl_elong_EFTs/EF1B_dimer"/>
</dbReference>
<dbReference type="InterPro" id="IPR018101">
    <property type="entry name" value="Transl_elong_Ts_CS"/>
</dbReference>
<dbReference type="InterPro" id="IPR009060">
    <property type="entry name" value="UBA-like_sf"/>
</dbReference>
<dbReference type="NCBIfam" id="TIGR00116">
    <property type="entry name" value="tsf"/>
    <property type="match status" value="1"/>
</dbReference>
<dbReference type="PANTHER" id="PTHR11741">
    <property type="entry name" value="ELONGATION FACTOR TS"/>
    <property type="match status" value="1"/>
</dbReference>
<dbReference type="PANTHER" id="PTHR11741:SF0">
    <property type="entry name" value="ELONGATION FACTOR TS, MITOCHONDRIAL"/>
    <property type="match status" value="1"/>
</dbReference>
<dbReference type="Pfam" id="PF00889">
    <property type="entry name" value="EF_TS"/>
    <property type="match status" value="1"/>
</dbReference>
<dbReference type="SUPFAM" id="SSF54713">
    <property type="entry name" value="Elongation factor Ts (EF-Ts), dimerisation domain"/>
    <property type="match status" value="2"/>
</dbReference>
<dbReference type="SUPFAM" id="SSF46934">
    <property type="entry name" value="UBA-like"/>
    <property type="match status" value="1"/>
</dbReference>
<dbReference type="PROSITE" id="PS01126">
    <property type="entry name" value="EF_TS_1"/>
    <property type="match status" value="1"/>
</dbReference>
<dbReference type="PROSITE" id="PS01127">
    <property type="entry name" value="EF_TS_2"/>
    <property type="match status" value="1"/>
</dbReference>
<reference key="1">
    <citation type="journal article" date="1998" name="Nature">
        <title>The complete genome of the hyperthermophilic bacterium Aquifex aeolicus.</title>
        <authorList>
            <person name="Deckert G."/>
            <person name="Warren P.V."/>
            <person name="Gaasterland T."/>
            <person name="Young W.G."/>
            <person name="Lenox A.L."/>
            <person name="Graham D.E."/>
            <person name="Overbeek R."/>
            <person name="Snead M.A."/>
            <person name="Keller M."/>
            <person name="Aujay M."/>
            <person name="Huber R."/>
            <person name="Feldman R.A."/>
            <person name="Short J.M."/>
            <person name="Olsen G.J."/>
            <person name="Swanson R.V."/>
        </authorList>
    </citation>
    <scope>NUCLEOTIDE SEQUENCE [LARGE SCALE GENOMIC DNA]</scope>
    <source>
        <strain>VF5</strain>
    </source>
</reference>
<protein>
    <recommendedName>
        <fullName>Elongation factor Ts</fullName>
        <shortName>EF-Ts</shortName>
    </recommendedName>
</protein>
<comment type="function">
    <text evidence="1">Associates with the EF-Tu.GDP complex and induces the exchange of GDP to GTP. It remains bound to the aminoacyl-tRNA.EF-Tu.GTP complex up to the GTP hydrolysis stage on the ribosome (By similarity).</text>
</comment>
<comment type="subcellular location">
    <subcellularLocation>
        <location evidence="1">Cytoplasm</location>
    </subcellularLocation>
</comment>
<comment type="similarity">
    <text evidence="2">Belongs to the EF-Ts family.</text>
</comment>
<evidence type="ECO:0000250" key="1"/>
<evidence type="ECO:0000305" key="2"/>
<keyword id="KW-0963">Cytoplasm</keyword>
<keyword id="KW-0251">Elongation factor</keyword>
<keyword id="KW-0648">Protein biosynthesis</keyword>
<keyword id="KW-1185">Reference proteome</keyword>
<proteinExistence type="inferred from homology"/>
<sequence length="290" mass="33365">MRMAVSMEDVKKLREMTGAGMLDCKKALEEAGGDIEKAKEILRVKGLAKAEKKAGRETKEGLIYVIVSEDRKKGAMIELNCETDFVARNEEFRKLAERITRHILEKDENKNKSGEGSEILSQELYDEPGKTVETLIKEAIAKIGENIRLSRYCRYDTEDYLHSYVHGGGRIGVLLDFKAPELNDQVLRLVQDVAMQIAAMRPEYVRIEDIPQEVLERERRILREQALQEGKPEHIVDKIVEGKLKKFYQEKVLLEQPFIKEEKKQVKDVIKESGLNVEIKRFCRFELGGL</sequence>
<feature type="chain" id="PRO_0000161066" description="Elongation factor Ts">
    <location>
        <begin position="1"/>
        <end position="290"/>
    </location>
</feature>
<feature type="region of interest" description="Involved in Mg(2+) ion dislocation from EF-Tu" evidence="1">
    <location>
        <begin position="83"/>
        <end position="86"/>
    </location>
</feature>
<organism>
    <name type="scientific">Aquifex aeolicus (strain VF5)</name>
    <dbReference type="NCBI Taxonomy" id="224324"/>
    <lineage>
        <taxon>Bacteria</taxon>
        <taxon>Pseudomonadati</taxon>
        <taxon>Aquificota</taxon>
        <taxon>Aquificia</taxon>
        <taxon>Aquificales</taxon>
        <taxon>Aquificaceae</taxon>
        <taxon>Aquifex</taxon>
    </lineage>
</organism>
<accession>O66930</accession>